<accession>Q5M9G1</accession>
<evidence type="ECO:0000250" key="1"/>
<evidence type="ECO:0000250" key="2">
    <source>
        <dbReference type="UniProtKB" id="O94992"/>
    </source>
</evidence>
<evidence type="ECO:0000250" key="3">
    <source>
        <dbReference type="UniProtKB" id="Q8R409"/>
    </source>
</evidence>
<evidence type="ECO:0000255" key="4"/>
<evidence type="ECO:0000256" key="5">
    <source>
        <dbReference type="SAM" id="MobiDB-lite"/>
    </source>
</evidence>
<evidence type="ECO:0000269" key="6">
    <source>
    </source>
</evidence>
<evidence type="ECO:0000303" key="7">
    <source>
    </source>
</evidence>
<evidence type="ECO:0000305" key="8"/>
<evidence type="ECO:0007744" key="9">
    <source>
    </source>
</evidence>
<gene>
    <name type="primary">Hexim1</name>
    <name evidence="7" type="synonym">Clp1</name>
</gene>
<name>HEXI1_RAT</name>
<feature type="chain" id="PRO_0000305265" description="Protein HEXIM1">
    <location>
        <begin position="1"/>
        <end position="356"/>
    </location>
</feature>
<feature type="region of interest" description="Disordered" evidence="5">
    <location>
        <begin position="1"/>
        <end position="160"/>
    </location>
</feature>
<feature type="region of interest" description="Basic region; mediates nuclear localization and interaction with 7SK snRNA and NR3C1" evidence="1">
    <location>
        <begin position="147"/>
        <end position="174"/>
    </location>
</feature>
<feature type="region of interest" description="Interaction with P-TEFb" evidence="1">
    <location>
        <begin position="199"/>
        <end position="202"/>
    </location>
</feature>
<feature type="region of interest" description="Autoinhibitory acidic region; in absence of 7SK snRNA interacts with the basic region preventing interaction with P-TEFb and modulating subcellular localization" evidence="1">
    <location>
        <begin position="207"/>
        <end position="247"/>
    </location>
</feature>
<feature type="region of interest" description="Disordered" evidence="5">
    <location>
        <begin position="209"/>
        <end position="259"/>
    </location>
</feature>
<feature type="region of interest" description="Mediates interaction with CCNT1" evidence="1">
    <location>
        <begin position="283"/>
        <end position="311"/>
    </location>
</feature>
<feature type="region of interest" description="Required for inhibition of ESR1-dependent transcription" evidence="1">
    <location>
        <begin position="307"/>
        <end position="352"/>
    </location>
</feature>
<feature type="region of interest" description="Disordered" evidence="5">
    <location>
        <begin position="337"/>
        <end position="356"/>
    </location>
</feature>
<feature type="coiled-coil region" evidence="4">
    <location>
        <begin position="280"/>
        <end position="346"/>
    </location>
</feature>
<feature type="compositionally biased region" description="Basic and acidic residues" evidence="5">
    <location>
        <begin position="1"/>
        <end position="11"/>
    </location>
</feature>
<feature type="compositionally biased region" description="Basic and acidic residues" evidence="5">
    <location>
        <begin position="24"/>
        <end position="47"/>
    </location>
</feature>
<feature type="compositionally biased region" description="Polar residues" evidence="5">
    <location>
        <begin position="48"/>
        <end position="58"/>
    </location>
</feature>
<feature type="compositionally biased region" description="Basic and acidic residues" evidence="5">
    <location>
        <begin position="84"/>
        <end position="93"/>
    </location>
</feature>
<feature type="compositionally biased region" description="Basic residues" evidence="5">
    <location>
        <begin position="145"/>
        <end position="160"/>
    </location>
</feature>
<feature type="compositionally biased region" description="Acidic residues" evidence="5">
    <location>
        <begin position="233"/>
        <end position="248"/>
    </location>
</feature>
<feature type="modified residue" description="Phosphoserine" evidence="2">
    <location>
        <position position="98"/>
    </location>
</feature>
<feature type="modified residue" description="Phosphoserine" evidence="9">
    <location>
        <position position="103"/>
    </location>
</feature>
<feature type="modified residue" description="Phosphoserine" evidence="2">
    <location>
        <position position="230"/>
    </location>
</feature>
<feature type="modified residue" description="Phosphothreonine" evidence="2">
    <location>
        <position position="233"/>
    </location>
</feature>
<feature type="modified residue" description="Phosphoserine" evidence="2">
    <location>
        <position position="234"/>
    </location>
</feature>
<feature type="modified residue" description="Phosphoserine" evidence="9">
    <location>
        <position position="249"/>
    </location>
</feature>
<feature type="modified residue" description="Phosphoserine" evidence="3">
    <location>
        <position position="257"/>
    </location>
</feature>
<sequence length="356" mass="40317">MAEPLLSEHQHQPQTSNCTGAAVVHEEQNSERPPSAEERVPKEDSRWQSRASLQSGSRPGQEGDGGLKHQLPPLQTNACPELSCLEKGEKGQNGEDLSTGGASPSAEGEPMSESLVQPGHDSEATKLEAPVAGVEEPWGQQQRQLGKKKHRRRPSKKKRHWKPYYKLTWEEKKKFDEKQSLRASRVRAEMFAKGQPVAPYNTTQFLMDDHDQEEPDLKTGLYPKRAAAKSDDTSDEDFVEEAGEEDGGSDGMGGDGSEFLQRDFSETYERYHAESLQNMSKQELIKEYLELEKCLSRKEDENNRLRLESKRLGGVDARVRELELELDRLRAENRQLLTENELHRQQERAPPSKFGD</sequence>
<proteinExistence type="evidence at protein level"/>
<keyword id="KW-0175">Coiled coil</keyword>
<keyword id="KW-0963">Cytoplasm</keyword>
<keyword id="KW-0391">Immunity</keyword>
<keyword id="KW-0399">Innate immunity</keyword>
<keyword id="KW-0539">Nucleus</keyword>
<keyword id="KW-0597">Phosphoprotein</keyword>
<keyword id="KW-1185">Reference proteome</keyword>
<keyword id="KW-0678">Repressor</keyword>
<keyword id="KW-0804">Transcription</keyword>
<keyword id="KW-0805">Transcription regulation</keyword>
<comment type="function">
    <text evidence="2">Transcriptional regulator which functions as a general RNA polymerase II transcription inhibitor. Core component of the 7SK RNP complex: in cooperation with 7SK snRNA sequesters P-TEFb in a large inactive 7SK snRNP complex preventing RNA polymerase II phosphorylation and subsequent transcriptional elongation. May also regulate NF-kappa-B, ESR1, NR3C1 and CIITA-dependent transcriptional activity. Plays a role in the regulation of DNA virus-mediated innate immune response by assembling into the HDP-RNP complex, a complex that serves as a platform for IRF3 phosphorylation and subsequent innate immune response activation through the cGAS-STING pathway.</text>
</comment>
<comment type="subunit">
    <text evidence="2">Homooligomer and heterooligomer with HEXIM2; probably dimeric. Core component of the 7SK RNP complex, at least composed of 7SK RNA, LARP7, MEPCE, HEXIM1 (or HEXIM2) and P-TEFb (composed of CDK9 and CCNT1/cyclin-T1). Interacts with the N-CoR complex through NCOR1. Interacts with ESR1 and NR3C1. May interact with NF-kappa-B through RELA. Interacts with CCNT2; mediates formation of a tripartite complex with KPNA2. Part of the HDP-RNP complex composed of at least HEXIM1, PRKDC, XRCC5, XRCC6, paraspeckle proteins (SFPQ, NONO, PSPC1, RBM14, and MATR3) and NEAT1 non-coding RNA.</text>
</comment>
<comment type="subcellular location">
    <subcellularLocation>
        <location evidence="2">Nucleus</location>
    </subcellularLocation>
    <subcellularLocation>
        <location evidence="2">Cytoplasm</location>
    </subcellularLocation>
    <text evidence="2">Binds alpha-importin and is mostly nuclear.</text>
</comment>
<comment type="induction">
    <text evidence="6">Up-regulated by HMBA (hexamethylene bisacetamide).</text>
</comment>
<comment type="domain">
    <text evidence="1">The coiled-coil domain mediates oligomerization.</text>
</comment>
<comment type="similarity">
    <text evidence="8">Belongs to the HEXIM family.</text>
</comment>
<protein>
    <recommendedName>
        <fullName>Protein HEXIM1</fullName>
    </recommendedName>
    <alternativeName>
        <fullName evidence="7">Cardiac lineage protein 1</fullName>
    </alternativeName>
</protein>
<reference key="1">
    <citation type="journal article" date="2004" name="Genome Res.">
        <title>The status, quality, and expansion of the NIH full-length cDNA project: the Mammalian Gene Collection (MGC).</title>
        <authorList>
            <consortium name="The MGC Project Team"/>
        </authorList>
    </citation>
    <scope>NUCLEOTIDE SEQUENCE [LARGE SCALE MRNA]</scope>
    <source>
        <tissue>Lung</tissue>
    </source>
</reference>
<reference key="2">
    <citation type="journal article" date="2002" name="Gene">
        <title>Structure, expression, and functional characterization of the mouse CLP-1 gene.</title>
        <authorList>
            <person name="Huang F."/>
            <person name="Wagner M."/>
            <person name="Siddiqui M.A.Q."/>
        </authorList>
    </citation>
    <scope>SUBCELLULAR LOCATION</scope>
    <scope>INDUCTION</scope>
</reference>
<reference key="3">
    <citation type="journal article" date="2012" name="Nat. Commun.">
        <title>Quantitative maps of protein phosphorylation sites across 14 different rat organs and tissues.</title>
        <authorList>
            <person name="Lundby A."/>
            <person name="Secher A."/>
            <person name="Lage K."/>
            <person name="Nordsborg N.B."/>
            <person name="Dmytriyev A."/>
            <person name="Lundby C."/>
            <person name="Olsen J.V."/>
        </authorList>
    </citation>
    <scope>PHOSPHORYLATION [LARGE SCALE ANALYSIS] AT SER-103 AND SER-249</scope>
    <scope>IDENTIFICATION BY MASS SPECTROMETRY [LARGE SCALE ANALYSIS]</scope>
</reference>
<organism>
    <name type="scientific">Rattus norvegicus</name>
    <name type="common">Rat</name>
    <dbReference type="NCBI Taxonomy" id="10116"/>
    <lineage>
        <taxon>Eukaryota</taxon>
        <taxon>Metazoa</taxon>
        <taxon>Chordata</taxon>
        <taxon>Craniata</taxon>
        <taxon>Vertebrata</taxon>
        <taxon>Euteleostomi</taxon>
        <taxon>Mammalia</taxon>
        <taxon>Eutheria</taxon>
        <taxon>Euarchontoglires</taxon>
        <taxon>Glires</taxon>
        <taxon>Rodentia</taxon>
        <taxon>Myomorpha</taxon>
        <taxon>Muroidea</taxon>
        <taxon>Muridae</taxon>
        <taxon>Murinae</taxon>
        <taxon>Rattus</taxon>
    </lineage>
</organism>
<dbReference type="EMBL" id="BC087133">
    <property type="protein sequence ID" value="AAH87133.1"/>
    <property type="molecule type" value="mRNA"/>
</dbReference>
<dbReference type="RefSeq" id="NP_001020307.1">
    <property type="nucleotide sequence ID" value="NM_001025136.1"/>
</dbReference>
<dbReference type="SMR" id="Q5M9G1"/>
<dbReference type="FunCoup" id="Q5M9G1">
    <property type="interactions" value="2144"/>
</dbReference>
<dbReference type="IntAct" id="Q5M9G1">
    <property type="interactions" value="1"/>
</dbReference>
<dbReference type="STRING" id="10116.ENSRNOP00000004272"/>
<dbReference type="iPTMnet" id="Q5M9G1"/>
<dbReference type="PhosphoSitePlus" id="Q5M9G1"/>
<dbReference type="PaxDb" id="10116-ENSRNOP00000004272"/>
<dbReference type="Ensembl" id="ENSRNOT00000004272.5">
    <property type="protein sequence ID" value="ENSRNOP00000004272.3"/>
    <property type="gene ID" value="ENSRNOG00000003203.5"/>
</dbReference>
<dbReference type="GeneID" id="498008"/>
<dbReference type="KEGG" id="rno:498008"/>
<dbReference type="UCSC" id="RGD:1559851">
    <property type="organism name" value="rat"/>
</dbReference>
<dbReference type="AGR" id="RGD:1559851"/>
<dbReference type="CTD" id="10614"/>
<dbReference type="RGD" id="1559851">
    <property type="gene designation" value="Hexim1"/>
</dbReference>
<dbReference type="eggNOG" id="ENOG502QQP8">
    <property type="taxonomic scope" value="Eukaryota"/>
</dbReference>
<dbReference type="GeneTree" id="ENSGT00390000002808"/>
<dbReference type="HOGENOM" id="CLU_066028_0_0_1"/>
<dbReference type="InParanoid" id="Q5M9G1"/>
<dbReference type="OMA" id="YTLTWEE"/>
<dbReference type="OrthoDB" id="10058500at2759"/>
<dbReference type="PhylomeDB" id="Q5M9G1"/>
<dbReference type="TreeFam" id="TF336851"/>
<dbReference type="PRO" id="PR:Q5M9G1"/>
<dbReference type="Proteomes" id="UP000002494">
    <property type="component" value="Chromosome 10"/>
</dbReference>
<dbReference type="Bgee" id="ENSRNOG00000003203">
    <property type="expression patterns" value="Expressed in ovary and 20 other cell types or tissues"/>
</dbReference>
<dbReference type="GO" id="GO:0120259">
    <property type="term" value="C:7SK snRNP"/>
    <property type="evidence" value="ECO:0000266"/>
    <property type="project" value="RGD"/>
</dbReference>
<dbReference type="GO" id="GO:0005737">
    <property type="term" value="C:cytoplasm"/>
    <property type="evidence" value="ECO:0000250"/>
    <property type="project" value="UniProtKB"/>
</dbReference>
<dbReference type="GO" id="GO:0005654">
    <property type="term" value="C:nucleoplasm"/>
    <property type="evidence" value="ECO:0000318"/>
    <property type="project" value="GO_Central"/>
</dbReference>
<dbReference type="GO" id="GO:0005634">
    <property type="term" value="C:nucleus"/>
    <property type="evidence" value="ECO:0000250"/>
    <property type="project" value="UniProtKB"/>
</dbReference>
<dbReference type="GO" id="GO:0097322">
    <property type="term" value="F:7SK snRNA binding"/>
    <property type="evidence" value="ECO:0000250"/>
    <property type="project" value="UniProtKB"/>
</dbReference>
<dbReference type="GO" id="GO:0004861">
    <property type="term" value="F:cyclin-dependent protein serine/threonine kinase inhibitor activity"/>
    <property type="evidence" value="ECO:0000250"/>
    <property type="project" value="UniProtKB"/>
</dbReference>
<dbReference type="GO" id="GO:0042802">
    <property type="term" value="F:identical protein binding"/>
    <property type="evidence" value="ECO:0000266"/>
    <property type="project" value="RGD"/>
</dbReference>
<dbReference type="GO" id="GO:0106140">
    <property type="term" value="F:P-TEFb complex binding"/>
    <property type="evidence" value="ECO:0000266"/>
    <property type="project" value="RGD"/>
</dbReference>
<dbReference type="GO" id="GO:0004860">
    <property type="term" value="F:protein kinase inhibitor activity"/>
    <property type="evidence" value="ECO:0000266"/>
    <property type="project" value="RGD"/>
</dbReference>
<dbReference type="GO" id="GO:0017069">
    <property type="term" value="F:snRNA binding"/>
    <property type="evidence" value="ECO:0000250"/>
    <property type="project" value="UniProtKB"/>
</dbReference>
<dbReference type="GO" id="GO:0140416">
    <property type="term" value="F:transcription regulator inhibitor activity"/>
    <property type="evidence" value="ECO:0000250"/>
    <property type="project" value="UniProtKB"/>
</dbReference>
<dbReference type="GO" id="GO:0002218">
    <property type="term" value="P:activation of innate immune response"/>
    <property type="evidence" value="ECO:0000266"/>
    <property type="project" value="RGD"/>
</dbReference>
<dbReference type="GO" id="GO:0007507">
    <property type="term" value="P:heart development"/>
    <property type="evidence" value="ECO:0000266"/>
    <property type="project" value="RGD"/>
</dbReference>
<dbReference type="GO" id="GO:0045087">
    <property type="term" value="P:innate immune response"/>
    <property type="evidence" value="ECO:0007669"/>
    <property type="project" value="UniProtKB-KW"/>
</dbReference>
<dbReference type="GO" id="GO:0045892">
    <property type="term" value="P:negative regulation of DNA-templated transcription"/>
    <property type="evidence" value="ECO:0000266"/>
    <property type="project" value="RGD"/>
</dbReference>
<dbReference type="GO" id="GO:0000122">
    <property type="term" value="P:negative regulation of transcription by RNA polymerase II"/>
    <property type="evidence" value="ECO:0000266"/>
    <property type="project" value="RGD"/>
</dbReference>
<dbReference type="GO" id="GO:0034244">
    <property type="term" value="P:negative regulation of transcription elongation by RNA polymerase II"/>
    <property type="evidence" value="ECO:0000250"/>
    <property type="project" value="UniProtKB"/>
</dbReference>
<dbReference type="GO" id="GO:0032897">
    <property type="term" value="P:negative regulation of viral transcription"/>
    <property type="evidence" value="ECO:0000266"/>
    <property type="project" value="RGD"/>
</dbReference>
<dbReference type="GO" id="GO:1901798">
    <property type="term" value="P:positive regulation of signal transduction by p53 class mediator"/>
    <property type="evidence" value="ECO:0000266"/>
    <property type="project" value="RGD"/>
</dbReference>
<dbReference type="Gene3D" id="6.10.250.2910">
    <property type="match status" value="1"/>
</dbReference>
<dbReference type="InterPro" id="IPR024872">
    <property type="entry name" value="HEXIM"/>
</dbReference>
<dbReference type="PANTHER" id="PTHR13469">
    <property type="entry name" value="HEXAMETHYLENE BISACETAMIDE INDUCIBLE 1"/>
    <property type="match status" value="1"/>
</dbReference>
<dbReference type="PANTHER" id="PTHR13469:SF7">
    <property type="entry name" value="PROTEIN HEXIM1"/>
    <property type="match status" value="1"/>
</dbReference>
<dbReference type="Pfam" id="PF15313">
    <property type="entry name" value="HEXIM"/>
    <property type="match status" value="1"/>
</dbReference>
<dbReference type="PRINTS" id="PR02094">
    <property type="entry name" value="HEXIMFAMILY"/>
</dbReference>